<feature type="chain" id="PRO_0000093102" description="UvrABC system protein A">
    <location>
        <begin position="1"/>
        <end position="942"/>
    </location>
</feature>
<feature type="domain" description="ABC transporter 1" evidence="1">
    <location>
        <begin position="308"/>
        <end position="589"/>
    </location>
</feature>
<feature type="domain" description="ABC transporter 2" evidence="1">
    <location>
        <begin position="609"/>
        <end position="937"/>
    </location>
</feature>
<feature type="zinc finger region" description="C4-type" evidence="1">
    <location>
        <begin position="251"/>
        <end position="278"/>
    </location>
</feature>
<feature type="zinc finger region" description="C4-type" evidence="1">
    <location>
        <begin position="740"/>
        <end position="766"/>
    </location>
</feature>
<feature type="binding site" evidence="1">
    <location>
        <begin position="32"/>
        <end position="39"/>
    </location>
    <ligand>
        <name>ATP</name>
        <dbReference type="ChEBI" id="CHEBI:30616"/>
    </ligand>
</feature>
<feature type="binding site" evidence="1">
    <location>
        <begin position="641"/>
        <end position="648"/>
    </location>
    <ligand>
        <name>ATP</name>
        <dbReference type="ChEBI" id="CHEBI:30616"/>
    </ligand>
</feature>
<feature type="sequence conflict" description="In Ref. 2; AAZ52168." evidence="2" ref="2">
    <original>T</original>
    <variation>P</variation>
    <location>
        <position position="428"/>
    </location>
</feature>
<sequence>MQNKIIIHGARAHNLKNIDVEIPRDKLVVVTGLSGSGKSSLAFDTIYAEGQRRYVESLSAYARQFLGNMEKPDVDSIDGLSPAISIDQKTTSKNPRSTVGTVTEINDYLRLLYARVGTPYCINGHGAITASSAEQIVEQVLALPERTRMQILAPVVRRKKGQHKTVFEKIQKDGYVRVRVDGDIFDVTEVPELSKSKMHNIEVVIDRLVNKDGIRSRLFDSVEAALRLGDGYLMIDTMDGNELLFSEHYSCPVCGFTVPELEPRLFSFNAPFGSCPTCDGLGIKLEVDLDLVVPDPSKSLREGALAPWNPISSNYYPTMLEQAMASFGVDMDTPFEALTEEERDLVLYGSGDREFHFHYVNDFGGERNIDIPFEGVVTNVNRRYHETNSDYTRNVMRGYMNELTCATCHGYRLNDQALCVHVGGEEGTHIGQISELSIADHLQLLEELELTENESTIAKPIVKEIHDRLTFLNNVGLNYLTLSRAAGTLSGGESQRIRLATQIGSNLSGVLYILDEPSIGLHQRDNDRLIESLKKMRDLGNTLIVVEHDEDTMMQADWLIDVGPGAGEFGGEITASGTPKQVAKNKKSITGQYLSGKKFIPVPLERRSGNGRFIEIKGAAQNNLQSLDVRFPLGKFIAVTGVSGSGKSTLVNSILKKAVAQKLNRNADKPGKYHSISGIEHIERLIDIDQSPIGRTPRSNPATYTGVFDDIRDLFAQTNEAKIRGYKKGRFSFNVKGGRCEACSGDGIIKIEMHFLPDVYVPCEVCHGRRYNSETLEVHYKGKNIAEVLDMTVDDALVFFSAIPKIARKIQTIKDVGLGYVTLGQPATTLSGGEAQRMKLASELHKRSTGKSLYILDEPTTGLHTDDIARLLKVLERFVDDGNTVLVIEHNLDVIKSADHIIDLGPEGGDGGGQIVATGTPEEVAQVKESYTGHYLKVKLQQ</sequence>
<reference key="1">
    <citation type="journal article" date="2001" name="Proc. Natl. Acad. Sci. U.S.A.">
        <title>Complete genome sequence of an M1 strain of Streptococcus pyogenes.</title>
        <authorList>
            <person name="Ferretti J.J."/>
            <person name="McShan W.M."/>
            <person name="Ajdic D.J."/>
            <person name="Savic D.J."/>
            <person name="Savic G."/>
            <person name="Lyon K."/>
            <person name="Primeaux C."/>
            <person name="Sezate S."/>
            <person name="Suvorov A.N."/>
            <person name="Kenton S."/>
            <person name="Lai H.S."/>
            <person name="Lin S.P."/>
            <person name="Qian Y."/>
            <person name="Jia H.G."/>
            <person name="Najar F.Z."/>
            <person name="Ren Q."/>
            <person name="Zhu H."/>
            <person name="Song L."/>
            <person name="White J."/>
            <person name="Yuan X."/>
            <person name="Clifton S.W."/>
            <person name="Roe B.A."/>
            <person name="McLaughlin R.E."/>
        </authorList>
    </citation>
    <scope>NUCLEOTIDE SEQUENCE [LARGE SCALE GENOMIC DNA]</scope>
    <source>
        <strain>ATCC 700294 / SF370 / Serotype M1</strain>
    </source>
</reference>
<reference key="2">
    <citation type="journal article" date="2005" name="J. Infect. Dis.">
        <title>Evolutionary origin and emergence of a highly successful clone of serotype M1 group A Streptococcus involved multiple horizontal gene transfer events.</title>
        <authorList>
            <person name="Sumby P."/>
            <person name="Porcella S.F."/>
            <person name="Madrigal A.G."/>
            <person name="Barbian K.D."/>
            <person name="Virtaneva K."/>
            <person name="Ricklefs S.M."/>
            <person name="Sturdevant D.E."/>
            <person name="Graham M.R."/>
            <person name="Vuopio-Varkila J."/>
            <person name="Hoe N.P."/>
            <person name="Musser J.M."/>
        </authorList>
    </citation>
    <scope>NUCLEOTIDE SEQUENCE [LARGE SCALE GENOMIC DNA]</scope>
    <source>
        <strain>ATCC BAA-947 / MGAS5005 / Serotype M1</strain>
    </source>
</reference>
<accession>Q99Y84</accession>
<accession>Q48WV7</accession>
<gene>
    <name evidence="1" type="primary">uvrA</name>
    <name type="ordered locus">SPy_1825</name>
    <name type="ordered locus">M5005_Spy1550</name>
</gene>
<organism>
    <name type="scientific">Streptococcus pyogenes serotype M1</name>
    <dbReference type="NCBI Taxonomy" id="301447"/>
    <lineage>
        <taxon>Bacteria</taxon>
        <taxon>Bacillati</taxon>
        <taxon>Bacillota</taxon>
        <taxon>Bacilli</taxon>
        <taxon>Lactobacillales</taxon>
        <taxon>Streptococcaceae</taxon>
        <taxon>Streptococcus</taxon>
    </lineage>
</organism>
<keyword id="KW-0067">ATP-binding</keyword>
<keyword id="KW-0963">Cytoplasm</keyword>
<keyword id="KW-0227">DNA damage</keyword>
<keyword id="KW-0228">DNA excision</keyword>
<keyword id="KW-0234">DNA repair</keyword>
<keyword id="KW-0238">DNA-binding</keyword>
<keyword id="KW-0267">Excision nuclease</keyword>
<keyword id="KW-0479">Metal-binding</keyword>
<keyword id="KW-0547">Nucleotide-binding</keyword>
<keyword id="KW-1185">Reference proteome</keyword>
<keyword id="KW-0677">Repeat</keyword>
<keyword id="KW-0742">SOS response</keyword>
<keyword id="KW-0862">Zinc</keyword>
<keyword id="KW-0863">Zinc-finger</keyword>
<dbReference type="EMBL" id="AE004092">
    <property type="protein sequence ID" value="AAK34548.1"/>
    <property type="molecule type" value="Genomic_DNA"/>
</dbReference>
<dbReference type="EMBL" id="CP000017">
    <property type="protein sequence ID" value="AAZ52168.1"/>
    <property type="status" value="ALT_INIT"/>
    <property type="molecule type" value="Genomic_DNA"/>
</dbReference>
<dbReference type="RefSeq" id="NP_269827.1">
    <property type="nucleotide sequence ID" value="NC_002737.2"/>
</dbReference>
<dbReference type="SMR" id="Q99Y84"/>
<dbReference type="PaxDb" id="1314-HKU360_01600"/>
<dbReference type="KEGG" id="spy:SPy_1825"/>
<dbReference type="KEGG" id="spz:M5005_Spy1550"/>
<dbReference type="PATRIC" id="fig|160490.10.peg.1585"/>
<dbReference type="HOGENOM" id="CLU_001370_0_2_9"/>
<dbReference type="OMA" id="EFFKAVP"/>
<dbReference type="Proteomes" id="UP000000750">
    <property type="component" value="Chromosome"/>
</dbReference>
<dbReference type="GO" id="GO:0005737">
    <property type="term" value="C:cytoplasm"/>
    <property type="evidence" value="ECO:0007669"/>
    <property type="project" value="UniProtKB-SubCell"/>
</dbReference>
<dbReference type="GO" id="GO:0009380">
    <property type="term" value="C:excinuclease repair complex"/>
    <property type="evidence" value="ECO:0007669"/>
    <property type="project" value="InterPro"/>
</dbReference>
<dbReference type="GO" id="GO:0005524">
    <property type="term" value="F:ATP binding"/>
    <property type="evidence" value="ECO:0007669"/>
    <property type="project" value="UniProtKB-UniRule"/>
</dbReference>
<dbReference type="GO" id="GO:0016887">
    <property type="term" value="F:ATP hydrolysis activity"/>
    <property type="evidence" value="ECO:0007669"/>
    <property type="project" value="InterPro"/>
</dbReference>
<dbReference type="GO" id="GO:0003677">
    <property type="term" value="F:DNA binding"/>
    <property type="evidence" value="ECO:0007669"/>
    <property type="project" value="UniProtKB-UniRule"/>
</dbReference>
<dbReference type="GO" id="GO:0009381">
    <property type="term" value="F:excinuclease ABC activity"/>
    <property type="evidence" value="ECO:0007669"/>
    <property type="project" value="UniProtKB-UniRule"/>
</dbReference>
<dbReference type="GO" id="GO:0008270">
    <property type="term" value="F:zinc ion binding"/>
    <property type="evidence" value="ECO:0007669"/>
    <property type="project" value="UniProtKB-UniRule"/>
</dbReference>
<dbReference type="GO" id="GO:0006289">
    <property type="term" value="P:nucleotide-excision repair"/>
    <property type="evidence" value="ECO:0007669"/>
    <property type="project" value="UniProtKB-UniRule"/>
</dbReference>
<dbReference type="GO" id="GO:0009432">
    <property type="term" value="P:SOS response"/>
    <property type="evidence" value="ECO:0007669"/>
    <property type="project" value="UniProtKB-UniRule"/>
</dbReference>
<dbReference type="CDD" id="cd03270">
    <property type="entry name" value="ABC_UvrA_I"/>
    <property type="match status" value="1"/>
</dbReference>
<dbReference type="CDD" id="cd03271">
    <property type="entry name" value="ABC_UvrA_II"/>
    <property type="match status" value="1"/>
</dbReference>
<dbReference type="FunFam" id="1.20.1580.10:FF:000002">
    <property type="entry name" value="UvrABC system protein A"/>
    <property type="match status" value="1"/>
</dbReference>
<dbReference type="FunFam" id="3.40.50.300:FF:000028">
    <property type="entry name" value="UvrABC system protein A"/>
    <property type="match status" value="1"/>
</dbReference>
<dbReference type="Gene3D" id="1.10.8.280">
    <property type="entry name" value="ABC transporter ATPase domain-like"/>
    <property type="match status" value="1"/>
</dbReference>
<dbReference type="Gene3D" id="1.20.1580.10">
    <property type="entry name" value="ABC transporter ATPase like domain"/>
    <property type="match status" value="2"/>
</dbReference>
<dbReference type="Gene3D" id="3.30.1490.20">
    <property type="entry name" value="ATP-grasp fold, A domain"/>
    <property type="match status" value="1"/>
</dbReference>
<dbReference type="Gene3D" id="3.40.50.300">
    <property type="entry name" value="P-loop containing nucleotide triphosphate hydrolases"/>
    <property type="match status" value="2"/>
</dbReference>
<dbReference type="HAMAP" id="MF_00205">
    <property type="entry name" value="UvrA"/>
    <property type="match status" value="1"/>
</dbReference>
<dbReference type="InterPro" id="IPR003593">
    <property type="entry name" value="AAA+_ATPase"/>
</dbReference>
<dbReference type="InterPro" id="IPR003439">
    <property type="entry name" value="ABC_transporter-like_ATP-bd"/>
</dbReference>
<dbReference type="InterPro" id="IPR017871">
    <property type="entry name" value="ABC_transporter-like_CS"/>
</dbReference>
<dbReference type="InterPro" id="IPR013815">
    <property type="entry name" value="ATP_grasp_subdomain_1"/>
</dbReference>
<dbReference type="InterPro" id="IPR027417">
    <property type="entry name" value="P-loop_NTPase"/>
</dbReference>
<dbReference type="InterPro" id="IPR004602">
    <property type="entry name" value="UvrA"/>
</dbReference>
<dbReference type="InterPro" id="IPR041552">
    <property type="entry name" value="UvrA_DNA-bd"/>
</dbReference>
<dbReference type="InterPro" id="IPR041102">
    <property type="entry name" value="UvrA_inter"/>
</dbReference>
<dbReference type="NCBIfam" id="NF001503">
    <property type="entry name" value="PRK00349.1"/>
    <property type="match status" value="1"/>
</dbReference>
<dbReference type="NCBIfam" id="TIGR00630">
    <property type="entry name" value="uvra"/>
    <property type="match status" value="1"/>
</dbReference>
<dbReference type="PANTHER" id="PTHR43152">
    <property type="entry name" value="UVRABC SYSTEM PROTEIN A"/>
    <property type="match status" value="1"/>
</dbReference>
<dbReference type="PANTHER" id="PTHR43152:SF3">
    <property type="entry name" value="UVRABC SYSTEM PROTEIN A"/>
    <property type="match status" value="1"/>
</dbReference>
<dbReference type="Pfam" id="PF17755">
    <property type="entry name" value="UvrA_DNA-bind"/>
    <property type="match status" value="1"/>
</dbReference>
<dbReference type="Pfam" id="PF17760">
    <property type="entry name" value="UvrA_inter"/>
    <property type="match status" value="1"/>
</dbReference>
<dbReference type="SMART" id="SM00382">
    <property type="entry name" value="AAA"/>
    <property type="match status" value="1"/>
</dbReference>
<dbReference type="SUPFAM" id="SSF52540">
    <property type="entry name" value="P-loop containing nucleoside triphosphate hydrolases"/>
    <property type="match status" value="2"/>
</dbReference>
<dbReference type="PROSITE" id="PS00211">
    <property type="entry name" value="ABC_TRANSPORTER_1"/>
    <property type="match status" value="2"/>
</dbReference>
<dbReference type="PROSITE" id="PS50893">
    <property type="entry name" value="ABC_TRANSPORTER_2"/>
    <property type="match status" value="1"/>
</dbReference>
<proteinExistence type="inferred from homology"/>
<comment type="function">
    <text evidence="1">The UvrABC repair system catalyzes the recognition and processing of DNA lesions. UvrA is an ATPase and a DNA-binding protein. A damage recognition complex composed of 2 UvrA and 2 UvrB subunits scans DNA for abnormalities. When the presence of a lesion has been verified by UvrB, the UvrA molecules dissociate.</text>
</comment>
<comment type="subunit">
    <text evidence="1">Forms a heterotetramer with UvrB during the search for lesions.</text>
</comment>
<comment type="subcellular location">
    <subcellularLocation>
        <location evidence="1">Cytoplasm</location>
    </subcellularLocation>
</comment>
<comment type="similarity">
    <text evidence="1">Belongs to the ABC transporter superfamily. UvrA family.</text>
</comment>
<comment type="sequence caution" evidence="2">
    <conflict type="erroneous initiation">
        <sequence resource="EMBL-CDS" id="AAZ52168"/>
    </conflict>
</comment>
<evidence type="ECO:0000255" key="1">
    <source>
        <dbReference type="HAMAP-Rule" id="MF_00205"/>
    </source>
</evidence>
<evidence type="ECO:0000305" key="2"/>
<name>UVRA_STRP1</name>
<protein>
    <recommendedName>
        <fullName evidence="1">UvrABC system protein A</fullName>
        <shortName evidence="1">UvrA protein</shortName>
    </recommendedName>
    <alternativeName>
        <fullName evidence="1">Excinuclease ABC subunit A</fullName>
    </alternativeName>
</protein>